<accession>Q1RGL5</accession>
<sequence length="132" mass="15014">MFISFVIIIILFILNYKQVKHLLYYTIVGVLLWVSMVEAGIHGTLCGAIIALFIPVNIKGQINSSFHKLEKLIQPFVNYFILPLFVFMNSGVLLKDFSFRSVCSSLTFGIILGLFIGKQLRSYAIFLSMREV</sequence>
<reference key="1">
    <citation type="journal article" date="2006" name="PLoS Genet.">
        <title>Genome sequence of Rickettsia bellii illuminates the role of amoebae in gene exchanges between intracellular pathogens.</title>
        <authorList>
            <person name="Ogata H."/>
            <person name="La Scola B."/>
            <person name="Audic S."/>
            <person name="Renesto P."/>
            <person name="Blanc G."/>
            <person name="Robert C."/>
            <person name="Fournier P.-E."/>
            <person name="Claverie J.-M."/>
            <person name="Raoult D."/>
        </authorList>
    </citation>
    <scope>NUCLEOTIDE SEQUENCE [LARGE SCALE GENOMIC DNA]</scope>
    <source>
        <strain>RML369-C</strain>
    </source>
</reference>
<comment type="subcellular location">
    <subcellularLocation>
        <location evidence="1">Cell inner membrane</location>
        <topology evidence="1">Multi-pass membrane protein</topology>
    </subcellularLocation>
</comment>
<comment type="similarity">
    <text evidence="3">Belongs to the NhaA Na(+)/H(+) (TC 2.A.33) antiporter family.</text>
</comment>
<comment type="caution">
    <text evidence="3">Could be the product of a pseudogene. This sequence is shorter than orthologs.</text>
</comment>
<keyword id="KW-0997">Cell inner membrane</keyword>
<keyword id="KW-1003">Cell membrane</keyword>
<keyword id="KW-0472">Membrane</keyword>
<keyword id="KW-0812">Transmembrane</keyword>
<keyword id="KW-1133">Transmembrane helix</keyword>
<dbReference type="EMBL" id="CP000087">
    <property type="protein sequence ID" value="ABE05499.1"/>
    <property type="molecule type" value="Genomic_DNA"/>
</dbReference>
<dbReference type="SMR" id="Q1RGL5"/>
<dbReference type="KEGG" id="rbe:RBE_1418"/>
<dbReference type="eggNOG" id="COG3004">
    <property type="taxonomic scope" value="Bacteria"/>
</dbReference>
<dbReference type="HOGENOM" id="CLU_1915509_0_0_5"/>
<dbReference type="Proteomes" id="UP000001951">
    <property type="component" value="Chromosome"/>
</dbReference>
<dbReference type="GO" id="GO:0005886">
    <property type="term" value="C:plasma membrane"/>
    <property type="evidence" value="ECO:0007669"/>
    <property type="project" value="UniProtKB-SubCell"/>
</dbReference>
<dbReference type="GO" id="GO:0015385">
    <property type="term" value="F:sodium:proton antiporter activity"/>
    <property type="evidence" value="ECO:0007669"/>
    <property type="project" value="TreeGrafter"/>
</dbReference>
<dbReference type="GO" id="GO:0006885">
    <property type="term" value="P:regulation of pH"/>
    <property type="evidence" value="ECO:0007669"/>
    <property type="project" value="InterPro"/>
</dbReference>
<dbReference type="Gene3D" id="1.20.1530.10">
    <property type="entry name" value="Na+/H+ antiporter like domain"/>
    <property type="match status" value="1"/>
</dbReference>
<dbReference type="InterPro" id="IPR023171">
    <property type="entry name" value="Na/H_antiporter_dom_sf"/>
</dbReference>
<dbReference type="InterPro" id="IPR004670">
    <property type="entry name" value="NhaA"/>
</dbReference>
<dbReference type="PANTHER" id="PTHR30341:SF0">
    <property type="entry name" value="NA(+)_H(+) ANTIPORTER NHAA"/>
    <property type="match status" value="1"/>
</dbReference>
<dbReference type="PANTHER" id="PTHR30341">
    <property type="entry name" value="SODIUM ION/PROTON ANTIPORTER NHAA-RELATED"/>
    <property type="match status" value="1"/>
</dbReference>
<dbReference type="Pfam" id="PF06965">
    <property type="entry name" value="Na_H_antiport_1"/>
    <property type="match status" value="1"/>
</dbReference>
<evidence type="ECO:0000250" key="1"/>
<evidence type="ECO:0000255" key="2"/>
<evidence type="ECO:0000305" key="3"/>
<proteinExistence type="uncertain"/>
<organism>
    <name type="scientific">Rickettsia bellii (strain RML369-C)</name>
    <dbReference type="NCBI Taxonomy" id="336407"/>
    <lineage>
        <taxon>Bacteria</taxon>
        <taxon>Pseudomonadati</taxon>
        <taxon>Pseudomonadota</taxon>
        <taxon>Alphaproteobacteria</taxon>
        <taxon>Rickettsiales</taxon>
        <taxon>Rickettsiaceae</taxon>
        <taxon>Rickettsieae</taxon>
        <taxon>Rickettsia</taxon>
        <taxon>belli group</taxon>
    </lineage>
</organism>
<protein>
    <recommendedName>
        <fullName>Putative Na(+)/H(+) antiporter NhaA homolog</fullName>
    </recommendedName>
</protein>
<gene>
    <name type="primary">nhaA</name>
    <name type="ordered locus">RBE_1418</name>
</gene>
<feature type="chain" id="PRO_0000334397" description="Putative Na(+)/H(+) antiporter NhaA homolog">
    <location>
        <begin position="1"/>
        <end position="132"/>
    </location>
</feature>
<feature type="transmembrane region" description="Helical" evidence="2">
    <location>
        <begin position="2"/>
        <end position="22"/>
    </location>
</feature>
<feature type="transmembrane region" description="Helical" evidence="2">
    <location>
        <begin position="36"/>
        <end position="56"/>
    </location>
</feature>
<feature type="transmembrane region" description="Helical" evidence="2">
    <location>
        <begin position="72"/>
        <end position="92"/>
    </location>
</feature>
<feature type="transmembrane region" description="Helical" evidence="2">
    <location>
        <begin position="97"/>
        <end position="117"/>
    </location>
</feature>
<name>NHAA_RICBR</name>